<comment type="function">
    <text evidence="1">With S4 and S12 plays an important role in translational accuracy.</text>
</comment>
<comment type="function">
    <text evidence="1">Located at the back of the 30S subunit body where it stabilizes the conformation of the head with respect to the body.</text>
</comment>
<comment type="subunit">
    <text evidence="1">Part of the 30S ribosomal subunit. Contacts proteins S4 and S8.</text>
</comment>
<comment type="domain">
    <text>The N-terminal domain interacts with the head of the 30S subunit; the C-terminal domain interacts with the body and contacts protein S4. The interaction surface between S4 and S5 is involved in control of translational fidelity.</text>
</comment>
<comment type="similarity">
    <text evidence="1">Belongs to the universal ribosomal protein uS5 family.</text>
</comment>
<keyword id="KW-1185">Reference proteome</keyword>
<keyword id="KW-0687">Ribonucleoprotein</keyword>
<keyword id="KW-0689">Ribosomal protein</keyword>
<keyword id="KW-0694">RNA-binding</keyword>
<keyword id="KW-0699">rRNA-binding</keyword>
<dbReference type="EMBL" id="CP000924">
    <property type="protein sequence ID" value="ABY94060.1"/>
    <property type="molecule type" value="Genomic_DNA"/>
</dbReference>
<dbReference type="RefSeq" id="WP_003868577.1">
    <property type="nucleotide sequence ID" value="NC_010321.1"/>
</dbReference>
<dbReference type="SMR" id="B0KCL7"/>
<dbReference type="STRING" id="340099.Teth39_0391"/>
<dbReference type="KEGG" id="tpd:Teth39_0391"/>
<dbReference type="eggNOG" id="COG0098">
    <property type="taxonomic scope" value="Bacteria"/>
</dbReference>
<dbReference type="HOGENOM" id="CLU_065898_2_2_9"/>
<dbReference type="Proteomes" id="UP000002156">
    <property type="component" value="Chromosome"/>
</dbReference>
<dbReference type="GO" id="GO:0015935">
    <property type="term" value="C:small ribosomal subunit"/>
    <property type="evidence" value="ECO:0007669"/>
    <property type="project" value="InterPro"/>
</dbReference>
<dbReference type="GO" id="GO:0019843">
    <property type="term" value="F:rRNA binding"/>
    <property type="evidence" value="ECO:0007669"/>
    <property type="project" value="UniProtKB-UniRule"/>
</dbReference>
<dbReference type="GO" id="GO:0003735">
    <property type="term" value="F:structural constituent of ribosome"/>
    <property type="evidence" value="ECO:0007669"/>
    <property type="project" value="InterPro"/>
</dbReference>
<dbReference type="GO" id="GO:0006412">
    <property type="term" value="P:translation"/>
    <property type="evidence" value="ECO:0007669"/>
    <property type="project" value="UniProtKB-UniRule"/>
</dbReference>
<dbReference type="FunFam" id="3.30.160.20:FF:000001">
    <property type="entry name" value="30S ribosomal protein S5"/>
    <property type="match status" value="1"/>
</dbReference>
<dbReference type="FunFam" id="3.30.230.10:FF:000002">
    <property type="entry name" value="30S ribosomal protein S5"/>
    <property type="match status" value="1"/>
</dbReference>
<dbReference type="Gene3D" id="3.30.160.20">
    <property type="match status" value="1"/>
</dbReference>
<dbReference type="Gene3D" id="3.30.230.10">
    <property type="match status" value="1"/>
</dbReference>
<dbReference type="HAMAP" id="MF_01307_B">
    <property type="entry name" value="Ribosomal_uS5_B"/>
    <property type="match status" value="1"/>
</dbReference>
<dbReference type="InterPro" id="IPR020568">
    <property type="entry name" value="Ribosomal_Su5_D2-typ_SF"/>
</dbReference>
<dbReference type="InterPro" id="IPR000851">
    <property type="entry name" value="Ribosomal_uS5"/>
</dbReference>
<dbReference type="InterPro" id="IPR005712">
    <property type="entry name" value="Ribosomal_uS5_bac-type"/>
</dbReference>
<dbReference type="InterPro" id="IPR005324">
    <property type="entry name" value="Ribosomal_uS5_C"/>
</dbReference>
<dbReference type="InterPro" id="IPR013810">
    <property type="entry name" value="Ribosomal_uS5_N"/>
</dbReference>
<dbReference type="InterPro" id="IPR018192">
    <property type="entry name" value="Ribosomal_uS5_N_CS"/>
</dbReference>
<dbReference type="InterPro" id="IPR014721">
    <property type="entry name" value="Ribsml_uS5_D2-typ_fold_subgr"/>
</dbReference>
<dbReference type="NCBIfam" id="TIGR01021">
    <property type="entry name" value="rpsE_bact"/>
    <property type="match status" value="1"/>
</dbReference>
<dbReference type="PANTHER" id="PTHR48277">
    <property type="entry name" value="MITOCHONDRIAL RIBOSOMAL PROTEIN S5"/>
    <property type="match status" value="1"/>
</dbReference>
<dbReference type="PANTHER" id="PTHR48277:SF1">
    <property type="entry name" value="MITOCHONDRIAL RIBOSOMAL PROTEIN S5"/>
    <property type="match status" value="1"/>
</dbReference>
<dbReference type="Pfam" id="PF00333">
    <property type="entry name" value="Ribosomal_S5"/>
    <property type="match status" value="1"/>
</dbReference>
<dbReference type="Pfam" id="PF03719">
    <property type="entry name" value="Ribosomal_S5_C"/>
    <property type="match status" value="1"/>
</dbReference>
<dbReference type="SUPFAM" id="SSF54768">
    <property type="entry name" value="dsRNA-binding domain-like"/>
    <property type="match status" value="1"/>
</dbReference>
<dbReference type="SUPFAM" id="SSF54211">
    <property type="entry name" value="Ribosomal protein S5 domain 2-like"/>
    <property type="match status" value="1"/>
</dbReference>
<dbReference type="PROSITE" id="PS00585">
    <property type="entry name" value="RIBOSOMAL_S5"/>
    <property type="match status" value="1"/>
</dbReference>
<dbReference type="PROSITE" id="PS50881">
    <property type="entry name" value="S5_DSRBD"/>
    <property type="match status" value="1"/>
</dbReference>
<accession>B0KCL7</accession>
<evidence type="ECO:0000255" key="1">
    <source>
        <dbReference type="HAMAP-Rule" id="MF_01307"/>
    </source>
</evidence>
<evidence type="ECO:0000305" key="2"/>
<gene>
    <name evidence="1" type="primary">rpsE</name>
    <name type="ordered locus">Teth39_0391</name>
</gene>
<sequence>MARVDWTKLDLKERVVSINRVSKVVKGGKNFRFSVTVVVGDAERGYVGVGRGKAAEIPDAIRKAIEDAKKHLIKVPIVGTTIPHEVIGEFGAGKVLLKPAREGTGVIAGGPVRAVLESAGIKDVLTKSLGSSNATNMVYATIEGLKRLRTAEDVAKLRGIPVSQLFE</sequence>
<feature type="chain" id="PRO_1000140899" description="Small ribosomal subunit protein uS5">
    <location>
        <begin position="1"/>
        <end position="167"/>
    </location>
</feature>
<feature type="domain" description="S5 DRBM" evidence="1">
    <location>
        <begin position="11"/>
        <end position="75"/>
    </location>
</feature>
<organism>
    <name type="scientific">Thermoanaerobacter pseudethanolicus (strain ATCC 33223 / 39E)</name>
    <name type="common">Clostridium thermohydrosulfuricum</name>
    <dbReference type="NCBI Taxonomy" id="340099"/>
    <lineage>
        <taxon>Bacteria</taxon>
        <taxon>Bacillati</taxon>
        <taxon>Bacillota</taxon>
        <taxon>Clostridia</taxon>
        <taxon>Thermoanaerobacterales</taxon>
        <taxon>Thermoanaerobacteraceae</taxon>
        <taxon>Thermoanaerobacter</taxon>
    </lineage>
</organism>
<proteinExistence type="inferred from homology"/>
<reference key="1">
    <citation type="submission" date="2008-01" db="EMBL/GenBank/DDBJ databases">
        <title>Complete sequence of Thermoanaerobacter pseudethanolicus 39E.</title>
        <authorList>
            <person name="Copeland A."/>
            <person name="Lucas S."/>
            <person name="Lapidus A."/>
            <person name="Barry K."/>
            <person name="Glavina del Rio T."/>
            <person name="Dalin E."/>
            <person name="Tice H."/>
            <person name="Pitluck S."/>
            <person name="Bruce D."/>
            <person name="Goodwin L."/>
            <person name="Saunders E."/>
            <person name="Brettin T."/>
            <person name="Detter J.C."/>
            <person name="Han C."/>
            <person name="Schmutz J."/>
            <person name="Larimer F."/>
            <person name="Land M."/>
            <person name="Hauser L."/>
            <person name="Kyrpides N."/>
            <person name="Lykidis A."/>
            <person name="Hemme C."/>
            <person name="Fields M.W."/>
            <person name="He Z."/>
            <person name="Zhou J."/>
            <person name="Richardson P."/>
        </authorList>
    </citation>
    <scope>NUCLEOTIDE SEQUENCE [LARGE SCALE GENOMIC DNA]</scope>
    <source>
        <strain>ATCC 33223 / DSM 2355 / 39E</strain>
    </source>
</reference>
<protein>
    <recommendedName>
        <fullName evidence="1">Small ribosomal subunit protein uS5</fullName>
    </recommendedName>
    <alternativeName>
        <fullName evidence="2">30S ribosomal protein S5</fullName>
    </alternativeName>
</protein>
<name>RS5_THEP3</name>